<organism>
    <name type="scientific">Streptococcus gordonii (strain Challis / ATCC 35105 / BCRC 15272 / CH1 / DL1 / V288)</name>
    <dbReference type="NCBI Taxonomy" id="467705"/>
    <lineage>
        <taxon>Bacteria</taxon>
        <taxon>Bacillati</taxon>
        <taxon>Bacillota</taxon>
        <taxon>Bacilli</taxon>
        <taxon>Lactobacillales</taxon>
        <taxon>Streptococcaceae</taxon>
        <taxon>Streptococcus</taxon>
    </lineage>
</organism>
<sequence>MTKLIFMGTPDFSATVLKGLLESDQYEVLAVVTQPDRAVGRKKEIRITPVKEVALSYGLPIYQPEKLSGSPEMEAIMNLGADGIVTVAFGQFLPSKLLARMNFVVNVHASLLPKHRGGAPIHYALIQGDKETGVTIMETVKEMDAGDMISRRSIPITDEDNVGTLFEKLAIVGRDLLLDTLPAYLSGDIQPEAQDPSQVTFSPNIRPEEERLDWNMTNRQLFNQIRGMNPWPVAHTLWQGERFKIYEAELADGEGQPGEILEIGKRQLLVATGEGALVLKTVQPAGKPKMTISDFLNGAGRNLAVGDKFGN</sequence>
<reference key="1">
    <citation type="journal article" date="2007" name="J. Bacteriol.">
        <title>Genome-wide transcriptional changes in Streptococcus gordonii in response to competence signaling peptide.</title>
        <authorList>
            <person name="Vickerman M.M."/>
            <person name="Iobst S."/>
            <person name="Jesionowski A.M."/>
            <person name="Gill S.R."/>
        </authorList>
    </citation>
    <scope>NUCLEOTIDE SEQUENCE [LARGE SCALE GENOMIC DNA]</scope>
    <source>
        <strain>Challis / ATCC 35105 / BCRC 15272 / CH1 / DL1 / V288</strain>
    </source>
</reference>
<gene>
    <name evidence="1" type="primary">fmt</name>
    <name type="ordered locus">SGO_0597</name>
</gene>
<comment type="function">
    <text evidence="1">Attaches a formyl group to the free amino group of methionyl-tRNA(fMet). The formyl group appears to play a dual role in the initiator identity of N-formylmethionyl-tRNA by promoting its recognition by IF2 and preventing the misappropriation of this tRNA by the elongation apparatus.</text>
</comment>
<comment type="catalytic activity">
    <reaction evidence="1">
        <text>L-methionyl-tRNA(fMet) + (6R)-10-formyltetrahydrofolate = N-formyl-L-methionyl-tRNA(fMet) + (6S)-5,6,7,8-tetrahydrofolate + H(+)</text>
        <dbReference type="Rhea" id="RHEA:24380"/>
        <dbReference type="Rhea" id="RHEA-COMP:9952"/>
        <dbReference type="Rhea" id="RHEA-COMP:9953"/>
        <dbReference type="ChEBI" id="CHEBI:15378"/>
        <dbReference type="ChEBI" id="CHEBI:57453"/>
        <dbReference type="ChEBI" id="CHEBI:78530"/>
        <dbReference type="ChEBI" id="CHEBI:78844"/>
        <dbReference type="ChEBI" id="CHEBI:195366"/>
        <dbReference type="EC" id="2.1.2.9"/>
    </reaction>
</comment>
<comment type="similarity">
    <text evidence="1">Belongs to the Fmt family.</text>
</comment>
<feature type="chain" id="PRO_1000077328" description="Methionyl-tRNA formyltransferase">
    <location>
        <begin position="1"/>
        <end position="311"/>
    </location>
</feature>
<feature type="binding site" evidence="1">
    <location>
        <begin position="110"/>
        <end position="113"/>
    </location>
    <ligand>
        <name>(6S)-5,6,7,8-tetrahydrofolate</name>
        <dbReference type="ChEBI" id="CHEBI:57453"/>
    </ligand>
</feature>
<protein>
    <recommendedName>
        <fullName evidence="1">Methionyl-tRNA formyltransferase</fullName>
        <ecNumber evidence="1">2.1.2.9</ecNumber>
    </recommendedName>
</protein>
<proteinExistence type="inferred from homology"/>
<name>FMT_STRGC</name>
<dbReference type="EC" id="2.1.2.9" evidence="1"/>
<dbReference type="EMBL" id="CP000725">
    <property type="protein sequence ID" value="ABV10866.1"/>
    <property type="molecule type" value="Genomic_DNA"/>
</dbReference>
<dbReference type="RefSeq" id="WP_012000091.1">
    <property type="nucleotide sequence ID" value="NC_009785.1"/>
</dbReference>
<dbReference type="SMR" id="A8AVV3"/>
<dbReference type="STRING" id="467705.SGO_0597"/>
<dbReference type="KEGG" id="sgo:SGO_0597"/>
<dbReference type="eggNOG" id="COG0223">
    <property type="taxonomic scope" value="Bacteria"/>
</dbReference>
<dbReference type="HOGENOM" id="CLU_033347_1_1_9"/>
<dbReference type="Proteomes" id="UP000001131">
    <property type="component" value="Chromosome"/>
</dbReference>
<dbReference type="GO" id="GO:0005829">
    <property type="term" value="C:cytosol"/>
    <property type="evidence" value="ECO:0007669"/>
    <property type="project" value="TreeGrafter"/>
</dbReference>
<dbReference type="GO" id="GO:0004479">
    <property type="term" value="F:methionyl-tRNA formyltransferase activity"/>
    <property type="evidence" value="ECO:0007669"/>
    <property type="project" value="UniProtKB-UniRule"/>
</dbReference>
<dbReference type="CDD" id="cd08646">
    <property type="entry name" value="FMT_core_Met-tRNA-FMT_N"/>
    <property type="match status" value="1"/>
</dbReference>
<dbReference type="CDD" id="cd08704">
    <property type="entry name" value="Met_tRNA_FMT_C"/>
    <property type="match status" value="1"/>
</dbReference>
<dbReference type="FunFam" id="3.40.50.170:FF:000004">
    <property type="entry name" value="Methionyl-tRNA formyltransferase"/>
    <property type="match status" value="1"/>
</dbReference>
<dbReference type="Gene3D" id="3.10.25.10">
    <property type="entry name" value="Formyl transferase, C-terminal domain"/>
    <property type="match status" value="1"/>
</dbReference>
<dbReference type="Gene3D" id="3.40.50.170">
    <property type="entry name" value="Formyl transferase, N-terminal domain"/>
    <property type="match status" value="1"/>
</dbReference>
<dbReference type="HAMAP" id="MF_00182">
    <property type="entry name" value="Formyl_trans"/>
    <property type="match status" value="1"/>
</dbReference>
<dbReference type="InterPro" id="IPR005794">
    <property type="entry name" value="Fmt"/>
</dbReference>
<dbReference type="InterPro" id="IPR005793">
    <property type="entry name" value="Formyl_trans_C"/>
</dbReference>
<dbReference type="InterPro" id="IPR037022">
    <property type="entry name" value="Formyl_trans_C_sf"/>
</dbReference>
<dbReference type="InterPro" id="IPR002376">
    <property type="entry name" value="Formyl_transf_N"/>
</dbReference>
<dbReference type="InterPro" id="IPR036477">
    <property type="entry name" value="Formyl_transf_N_sf"/>
</dbReference>
<dbReference type="InterPro" id="IPR011034">
    <property type="entry name" value="Formyl_transferase-like_C_sf"/>
</dbReference>
<dbReference type="InterPro" id="IPR001555">
    <property type="entry name" value="GART_AS"/>
</dbReference>
<dbReference type="InterPro" id="IPR044135">
    <property type="entry name" value="Met-tRNA-FMT_C"/>
</dbReference>
<dbReference type="InterPro" id="IPR041711">
    <property type="entry name" value="Met-tRNA-FMT_N"/>
</dbReference>
<dbReference type="NCBIfam" id="TIGR00460">
    <property type="entry name" value="fmt"/>
    <property type="match status" value="1"/>
</dbReference>
<dbReference type="PANTHER" id="PTHR11138">
    <property type="entry name" value="METHIONYL-TRNA FORMYLTRANSFERASE"/>
    <property type="match status" value="1"/>
</dbReference>
<dbReference type="PANTHER" id="PTHR11138:SF5">
    <property type="entry name" value="METHIONYL-TRNA FORMYLTRANSFERASE, MITOCHONDRIAL"/>
    <property type="match status" value="1"/>
</dbReference>
<dbReference type="Pfam" id="PF02911">
    <property type="entry name" value="Formyl_trans_C"/>
    <property type="match status" value="1"/>
</dbReference>
<dbReference type="Pfam" id="PF00551">
    <property type="entry name" value="Formyl_trans_N"/>
    <property type="match status" value="1"/>
</dbReference>
<dbReference type="SUPFAM" id="SSF50486">
    <property type="entry name" value="FMT C-terminal domain-like"/>
    <property type="match status" value="1"/>
</dbReference>
<dbReference type="SUPFAM" id="SSF53328">
    <property type="entry name" value="Formyltransferase"/>
    <property type="match status" value="1"/>
</dbReference>
<dbReference type="PROSITE" id="PS00373">
    <property type="entry name" value="GART"/>
    <property type="match status" value="1"/>
</dbReference>
<accession>A8AVV3</accession>
<keyword id="KW-0648">Protein biosynthesis</keyword>
<keyword id="KW-1185">Reference proteome</keyword>
<keyword id="KW-0808">Transferase</keyword>
<evidence type="ECO:0000255" key="1">
    <source>
        <dbReference type="HAMAP-Rule" id="MF_00182"/>
    </source>
</evidence>